<evidence type="ECO:0000250" key="1"/>
<evidence type="ECO:0000250" key="2">
    <source>
        <dbReference type="UniProtKB" id="Q0ZPV7"/>
    </source>
</evidence>
<evidence type="ECO:0000250" key="3">
    <source>
        <dbReference type="UniProtKB" id="Q5NUF3"/>
    </source>
</evidence>
<evidence type="ECO:0000256" key="4">
    <source>
        <dbReference type="SAM" id="MobiDB-lite"/>
    </source>
</evidence>
<evidence type="ECO:0000269" key="5">
    <source>
    </source>
</evidence>
<evidence type="ECO:0000305" key="6"/>
<name>CXE16_ARATH</name>
<reference key="1">
    <citation type="journal article" date="2000" name="Nature">
        <title>Sequence and analysis of chromosome 5 of the plant Arabidopsis thaliana.</title>
        <authorList>
            <person name="Tabata S."/>
            <person name="Kaneko T."/>
            <person name="Nakamura Y."/>
            <person name="Kotani H."/>
            <person name="Kato T."/>
            <person name="Asamizu E."/>
            <person name="Miyajima N."/>
            <person name="Sasamoto S."/>
            <person name="Kimura T."/>
            <person name="Hosouchi T."/>
            <person name="Kawashima K."/>
            <person name="Kohara M."/>
            <person name="Matsumoto M."/>
            <person name="Matsuno A."/>
            <person name="Muraki A."/>
            <person name="Nakayama S."/>
            <person name="Nakazaki N."/>
            <person name="Naruo K."/>
            <person name="Okumura S."/>
            <person name="Shinpo S."/>
            <person name="Takeuchi C."/>
            <person name="Wada T."/>
            <person name="Watanabe A."/>
            <person name="Yamada M."/>
            <person name="Yasuda M."/>
            <person name="Sato S."/>
            <person name="de la Bastide M."/>
            <person name="Huang E."/>
            <person name="Spiegel L."/>
            <person name="Gnoj L."/>
            <person name="O'Shaughnessy A."/>
            <person name="Preston R."/>
            <person name="Habermann K."/>
            <person name="Murray J."/>
            <person name="Johnson D."/>
            <person name="Rohlfing T."/>
            <person name="Nelson J."/>
            <person name="Stoneking T."/>
            <person name="Pepin K."/>
            <person name="Spieth J."/>
            <person name="Sekhon M."/>
            <person name="Armstrong J."/>
            <person name="Becker M."/>
            <person name="Belter E."/>
            <person name="Cordum H."/>
            <person name="Cordes M."/>
            <person name="Courtney L."/>
            <person name="Courtney W."/>
            <person name="Dante M."/>
            <person name="Du H."/>
            <person name="Edwards J."/>
            <person name="Fryman J."/>
            <person name="Haakensen B."/>
            <person name="Lamar E."/>
            <person name="Latreille P."/>
            <person name="Leonard S."/>
            <person name="Meyer R."/>
            <person name="Mulvaney E."/>
            <person name="Ozersky P."/>
            <person name="Riley A."/>
            <person name="Strowmatt C."/>
            <person name="Wagner-McPherson C."/>
            <person name="Wollam A."/>
            <person name="Yoakum M."/>
            <person name="Bell M."/>
            <person name="Dedhia N."/>
            <person name="Parnell L."/>
            <person name="Shah R."/>
            <person name="Rodriguez M."/>
            <person name="Hoon See L."/>
            <person name="Vil D."/>
            <person name="Baker J."/>
            <person name="Kirchoff K."/>
            <person name="Toth K."/>
            <person name="King L."/>
            <person name="Bahret A."/>
            <person name="Miller B."/>
            <person name="Marra M.A."/>
            <person name="Martienssen R."/>
            <person name="McCombie W.R."/>
            <person name="Wilson R.K."/>
            <person name="Murphy G."/>
            <person name="Bancroft I."/>
            <person name="Volckaert G."/>
            <person name="Wambutt R."/>
            <person name="Duesterhoeft A."/>
            <person name="Stiekema W."/>
            <person name="Pohl T."/>
            <person name="Entian K.-D."/>
            <person name="Terryn N."/>
            <person name="Hartley N."/>
            <person name="Bent E."/>
            <person name="Johnson S."/>
            <person name="Langham S.-A."/>
            <person name="McCullagh B."/>
            <person name="Robben J."/>
            <person name="Grymonprez B."/>
            <person name="Zimmermann W."/>
            <person name="Ramsperger U."/>
            <person name="Wedler H."/>
            <person name="Balke K."/>
            <person name="Wedler E."/>
            <person name="Peters S."/>
            <person name="van Staveren M."/>
            <person name="Dirkse W."/>
            <person name="Mooijman P."/>
            <person name="Klein Lankhorst R."/>
            <person name="Weitzenegger T."/>
            <person name="Bothe G."/>
            <person name="Rose M."/>
            <person name="Hauf J."/>
            <person name="Berneiser S."/>
            <person name="Hempel S."/>
            <person name="Feldpausch M."/>
            <person name="Lamberth S."/>
            <person name="Villarroel R."/>
            <person name="Gielen J."/>
            <person name="Ardiles W."/>
            <person name="Bents O."/>
            <person name="Lemcke K."/>
            <person name="Kolesov G."/>
            <person name="Mayer K.F.X."/>
            <person name="Rudd S."/>
            <person name="Schoof H."/>
            <person name="Schueller C."/>
            <person name="Zaccaria P."/>
            <person name="Mewes H.-W."/>
            <person name="Bevan M."/>
            <person name="Fransz P.F."/>
        </authorList>
    </citation>
    <scope>NUCLEOTIDE SEQUENCE [LARGE SCALE GENOMIC DNA]</scope>
    <source>
        <strain>cv. Columbia</strain>
    </source>
</reference>
<reference key="2">
    <citation type="journal article" date="2017" name="Plant J.">
        <title>Araport11: a complete reannotation of the Arabidopsis thaliana reference genome.</title>
        <authorList>
            <person name="Cheng C.Y."/>
            <person name="Krishnakumar V."/>
            <person name="Chan A.P."/>
            <person name="Thibaud-Nissen F."/>
            <person name="Schobel S."/>
            <person name="Town C.D."/>
        </authorList>
    </citation>
    <scope>GENOME REANNOTATION</scope>
    <source>
        <strain>cv. Columbia</strain>
    </source>
</reference>
<reference key="3">
    <citation type="journal article" date="2003" name="Science">
        <title>Empirical analysis of transcriptional activity in the Arabidopsis genome.</title>
        <authorList>
            <person name="Yamada K."/>
            <person name="Lim J."/>
            <person name="Dale J.M."/>
            <person name="Chen H."/>
            <person name="Shinn P."/>
            <person name="Palm C.J."/>
            <person name="Southwick A.M."/>
            <person name="Wu H.C."/>
            <person name="Kim C.J."/>
            <person name="Nguyen M."/>
            <person name="Pham P.K."/>
            <person name="Cheuk R.F."/>
            <person name="Karlin-Newmann G."/>
            <person name="Liu S.X."/>
            <person name="Lam B."/>
            <person name="Sakano H."/>
            <person name="Wu T."/>
            <person name="Yu G."/>
            <person name="Miranda M."/>
            <person name="Quach H.L."/>
            <person name="Tripp M."/>
            <person name="Chang C.H."/>
            <person name="Lee J.M."/>
            <person name="Toriumi M.J."/>
            <person name="Chan M.M."/>
            <person name="Tang C.C."/>
            <person name="Onodera C.S."/>
            <person name="Deng J.M."/>
            <person name="Akiyama K."/>
            <person name="Ansari Y."/>
            <person name="Arakawa T."/>
            <person name="Banh J."/>
            <person name="Banno F."/>
            <person name="Bowser L."/>
            <person name="Brooks S.Y."/>
            <person name="Carninci P."/>
            <person name="Chao Q."/>
            <person name="Choy N."/>
            <person name="Enju A."/>
            <person name="Goldsmith A.D."/>
            <person name="Gurjal M."/>
            <person name="Hansen N.F."/>
            <person name="Hayashizaki Y."/>
            <person name="Johnson-Hopson C."/>
            <person name="Hsuan V.W."/>
            <person name="Iida K."/>
            <person name="Karnes M."/>
            <person name="Khan S."/>
            <person name="Koesema E."/>
            <person name="Ishida J."/>
            <person name="Jiang P.X."/>
            <person name="Jones T."/>
            <person name="Kawai J."/>
            <person name="Kamiya A."/>
            <person name="Meyers C."/>
            <person name="Nakajima M."/>
            <person name="Narusaka M."/>
            <person name="Seki M."/>
            <person name="Sakurai T."/>
            <person name="Satou M."/>
            <person name="Tamse R."/>
            <person name="Vaysberg M."/>
            <person name="Wallender E.K."/>
            <person name="Wong C."/>
            <person name="Yamamura Y."/>
            <person name="Yuan S."/>
            <person name="Shinozaki K."/>
            <person name="Davis R.W."/>
            <person name="Theologis A."/>
            <person name="Ecker J.R."/>
        </authorList>
    </citation>
    <scope>NUCLEOTIDE SEQUENCE [LARGE SCALE MRNA]</scope>
    <source>
        <strain>cv. Columbia</strain>
    </source>
</reference>
<reference key="4">
    <citation type="submission" date="2002-03" db="EMBL/GenBank/DDBJ databases">
        <title>Full-length cDNA from Arabidopsis thaliana.</title>
        <authorList>
            <person name="Brover V.V."/>
            <person name="Troukhan M.E."/>
            <person name="Alexandrov N.A."/>
            <person name="Lu Y.-P."/>
            <person name="Flavell R.B."/>
            <person name="Feldmann K.A."/>
        </authorList>
    </citation>
    <scope>NUCLEOTIDE SEQUENCE [LARGE SCALE MRNA]</scope>
</reference>
<reference key="5">
    <citation type="journal article" date="2003" name="J. Mol. Evol.">
        <title>The carboxylesterase gene family from Arabidopsis thaliana.</title>
        <authorList>
            <person name="Marshall S.D."/>
            <person name="Putterill J.J."/>
            <person name="Plummer K.M."/>
            <person name="Newcomb R.D."/>
        </authorList>
    </citation>
    <scope>TISSUE SPECIFICITY</scope>
    <scope>GENE FAMILY</scope>
    <scope>NOMENCLATURE</scope>
</reference>
<proteinExistence type="evidence at transcript level"/>
<protein>
    <recommendedName>
        <fullName>Probable carboxylesterase 16</fullName>
    </recommendedName>
    <alternativeName>
        <fullName>AtCXE16</fullName>
        <ecNumber>3.1.1.1</ecNumber>
    </alternativeName>
</protein>
<accession>Q8LED9</accession>
<accession>Q9LY98</accession>
<comment type="function">
    <text evidence="1">Carboxylesterase acting on esters with varying acyl chain length.</text>
</comment>
<comment type="catalytic activity">
    <reaction>
        <text>a carboxylic ester + H2O = an alcohol + a carboxylate + H(+)</text>
        <dbReference type="Rhea" id="RHEA:21164"/>
        <dbReference type="ChEBI" id="CHEBI:15377"/>
        <dbReference type="ChEBI" id="CHEBI:15378"/>
        <dbReference type="ChEBI" id="CHEBI:29067"/>
        <dbReference type="ChEBI" id="CHEBI:30879"/>
        <dbReference type="ChEBI" id="CHEBI:33308"/>
        <dbReference type="EC" id="3.1.1.1"/>
    </reaction>
</comment>
<comment type="tissue specificity">
    <text evidence="5">Expressed in roots, leaves, stems, flowers and siliques.</text>
</comment>
<comment type="similarity">
    <text evidence="6">Belongs to the 'GDXG' lipolytic enzyme family.</text>
</comment>
<comment type="sequence caution" evidence="6">
    <conflict type="erroneous gene model prediction">
        <sequence resource="EMBL-CDS" id="CAB87770"/>
    </conflict>
</comment>
<organism>
    <name type="scientific">Arabidopsis thaliana</name>
    <name type="common">Mouse-ear cress</name>
    <dbReference type="NCBI Taxonomy" id="3702"/>
    <lineage>
        <taxon>Eukaryota</taxon>
        <taxon>Viridiplantae</taxon>
        <taxon>Streptophyta</taxon>
        <taxon>Embryophyta</taxon>
        <taxon>Tracheophyta</taxon>
        <taxon>Spermatophyta</taxon>
        <taxon>Magnoliopsida</taxon>
        <taxon>eudicotyledons</taxon>
        <taxon>Gunneridae</taxon>
        <taxon>Pentapetalae</taxon>
        <taxon>rosids</taxon>
        <taxon>malvids</taxon>
        <taxon>Brassicales</taxon>
        <taxon>Brassicaceae</taxon>
        <taxon>Camelineae</taxon>
        <taxon>Arabidopsis</taxon>
    </lineage>
</organism>
<gene>
    <name type="primary">CXE16</name>
    <name type="ordered locus">At5g14310</name>
    <name type="ORF">F18O22.100</name>
</gene>
<feature type="chain" id="PRO_0000402560" description="Probable carboxylesterase 16">
    <location>
        <begin position="1"/>
        <end position="446"/>
    </location>
</feature>
<feature type="region of interest" description="Disordered" evidence="4">
    <location>
        <begin position="84"/>
        <end position="131"/>
    </location>
</feature>
<feature type="short sequence motif" description="Involved in the stabilization of the negatively charged intermediate by the formation of the oxyanion hole" evidence="3">
    <location>
        <begin position="158"/>
        <end position="160"/>
    </location>
</feature>
<feature type="compositionally biased region" description="Basic and acidic residues" evidence="4">
    <location>
        <begin position="87"/>
        <end position="105"/>
    </location>
</feature>
<feature type="active site" evidence="2">
    <location>
        <position position="274"/>
    </location>
</feature>
<feature type="active site" evidence="2">
    <location>
        <position position="378"/>
    </location>
</feature>
<feature type="active site" evidence="2">
    <location>
        <position position="408"/>
    </location>
</feature>
<keyword id="KW-0378">Hydrolase</keyword>
<keyword id="KW-1185">Reference proteome</keyword>
<keyword id="KW-0719">Serine esterase</keyword>
<dbReference type="EC" id="3.1.1.1"/>
<dbReference type="EMBL" id="AL163817">
    <property type="protein sequence ID" value="CAB87770.1"/>
    <property type="status" value="ALT_SEQ"/>
    <property type="molecule type" value="Genomic_DNA"/>
</dbReference>
<dbReference type="EMBL" id="CP002688">
    <property type="protein sequence ID" value="AED92015.1"/>
    <property type="molecule type" value="Genomic_DNA"/>
</dbReference>
<dbReference type="EMBL" id="BT000439">
    <property type="protein sequence ID" value="AAN17416.1"/>
    <property type="molecule type" value="mRNA"/>
</dbReference>
<dbReference type="EMBL" id="BT001209">
    <property type="protein sequence ID" value="AAN65096.1"/>
    <property type="molecule type" value="mRNA"/>
</dbReference>
<dbReference type="EMBL" id="AY085477">
    <property type="protein sequence ID" value="AAM62703.1"/>
    <property type="molecule type" value="mRNA"/>
</dbReference>
<dbReference type="PIR" id="T48604">
    <property type="entry name" value="T48604"/>
</dbReference>
<dbReference type="RefSeq" id="NP_568298.1">
    <property type="nucleotide sequence ID" value="NM_121435.2"/>
</dbReference>
<dbReference type="SMR" id="Q8LED9"/>
<dbReference type="FunCoup" id="Q8LED9">
    <property type="interactions" value="430"/>
</dbReference>
<dbReference type="STRING" id="3702.Q8LED9"/>
<dbReference type="ESTHER" id="arath-At5g14310">
    <property type="family name" value="Plant_carboxylesterase"/>
</dbReference>
<dbReference type="MEROPS" id="S09.A08"/>
<dbReference type="iPTMnet" id="Q8LED9"/>
<dbReference type="PaxDb" id="3702-AT5G14310.1"/>
<dbReference type="ProteomicsDB" id="220434"/>
<dbReference type="EnsemblPlants" id="AT5G14310.1">
    <property type="protein sequence ID" value="AT5G14310.1"/>
    <property type="gene ID" value="AT5G14310"/>
</dbReference>
<dbReference type="GeneID" id="831281"/>
<dbReference type="Gramene" id="AT5G14310.1">
    <property type="protein sequence ID" value="AT5G14310.1"/>
    <property type="gene ID" value="AT5G14310"/>
</dbReference>
<dbReference type="KEGG" id="ath:AT5G14310"/>
<dbReference type="Araport" id="AT5G14310"/>
<dbReference type="TAIR" id="AT5G14310">
    <property type="gene designation" value="CXE16"/>
</dbReference>
<dbReference type="eggNOG" id="KOG1515">
    <property type="taxonomic scope" value="Eukaryota"/>
</dbReference>
<dbReference type="HOGENOM" id="CLU_012494_14_0_1"/>
<dbReference type="InParanoid" id="Q8LED9"/>
<dbReference type="OMA" id="NDCVAND"/>
<dbReference type="OrthoDB" id="408631at2759"/>
<dbReference type="PhylomeDB" id="Q8LED9"/>
<dbReference type="PRO" id="PR:Q8LED9"/>
<dbReference type="Proteomes" id="UP000006548">
    <property type="component" value="Chromosome 5"/>
</dbReference>
<dbReference type="ExpressionAtlas" id="Q8LED9">
    <property type="expression patterns" value="baseline and differential"/>
</dbReference>
<dbReference type="GO" id="GO:0106435">
    <property type="term" value="F:carboxylesterase activity"/>
    <property type="evidence" value="ECO:0007669"/>
    <property type="project" value="UniProtKB-EC"/>
</dbReference>
<dbReference type="Gene3D" id="3.40.50.1820">
    <property type="entry name" value="alpha/beta hydrolase"/>
    <property type="match status" value="1"/>
</dbReference>
<dbReference type="InterPro" id="IPR013094">
    <property type="entry name" value="AB_hydrolase_3"/>
</dbReference>
<dbReference type="InterPro" id="IPR029058">
    <property type="entry name" value="AB_hydrolase_fold"/>
</dbReference>
<dbReference type="InterPro" id="IPR050466">
    <property type="entry name" value="Carboxylest/Gibb_receptor"/>
</dbReference>
<dbReference type="InterPro" id="IPR002168">
    <property type="entry name" value="Lipase_GDXG_HIS_AS"/>
</dbReference>
<dbReference type="PANTHER" id="PTHR23024">
    <property type="entry name" value="ARYLACETAMIDE DEACETYLASE"/>
    <property type="match status" value="1"/>
</dbReference>
<dbReference type="PANTHER" id="PTHR23024:SF455">
    <property type="entry name" value="CARBOXYLESTERASE 16-RELATED"/>
    <property type="match status" value="1"/>
</dbReference>
<dbReference type="Pfam" id="PF07859">
    <property type="entry name" value="Abhydrolase_3"/>
    <property type="match status" value="1"/>
</dbReference>
<dbReference type="SUPFAM" id="SSF53474">
    <property type="entry name" value="alpha/beta-Hydrolases"/>
    <property type="match status" value="1"/>
</dbReference>
<dbReference type="PROSITE" id="PS01173">
    <property type="entry name" value="LIPASE_GDXG_HIS"/>
    <property type="match status" value="1"/>
</dbReference>
<sequence length="446" mass="49368">MPGVAVKLYSVFFKLLLKHRLQNLISISAADGLSDSFGVSTRSDESVAAANPSFTDGVATKDIHIDPMTSLTVRIFLPESALSPEPDSLRHKDNYNHQPRSDRRHSYGPNHNSPAPAERNESRRNSYGCNNENLEPYGGYAPSAKRNSRKLPVMLQFHGGGWVSGSSDSAANDFFCRRIAKVCDVIVLAVGYRLAPENRYPAAFEDGVKVLHWLGKQANLADCCKSLGNRRVNGVEVKKLNVQGQIVDAFGASMVEPWLAAHADPSRCVLLGVSCGGNIADYVARKAVEAGKLLEPVKVVAQVLMYPFFIGNNPTQSEIKLANSYFYDKPVSVLAWKLFLPEKEFDFDHPAANPLAHNRSGPPLKLMPPTLTVVAEHDWMRDRAIAYSEELRKVNVDSPVLEYKDAVHEFATLDMLLKTPQAQACAEDIAIWVKKYISLRGHEFSY</sequence>